<comment type="function">
    <text evidence="1">May act as an effector for ARL3.</text>
</comment>
<comment type="subunit">
    <text evidence="1">Interacts with ARL3.</text>
</comment>
<comment type="interaction">
    <interactant intactId="EBI-16180842">
        <id>Q8C6E0</id>
    </interactant>
    <interactant intactId="EBI-6860857">
        <id>Q9WUL7</id>
        <label>Arl3</label>
    </interactant>
    <organismsDiffer>false</organismsDiffer>
    <experiments>5</experiments>
</comment>
<comment type="subcellular location">
    <subcellularLocation>
        <location evidence="2">Nucleus</location>
    </subcellularLocation>
    <subcellularLocation>
        <location evidence="2">Cytoplasm</location>
    </subcellularLocation>
    <subcellularLocation>
        <location evidence="5">Cell projection</location>
        <location evidence="5">Cilium</location>
        <location evidence="5">Flagellum</location>
    </subcellularLocation>
</comment>
<comment type="similarity">
    <text evidence="5">Belongs to the CFAP36 family.</text>
</comment>
<proteinExistence type="evidence at protein level"/>
<sequence length="343" mass="39600">MAAEEEDEVEWVVESIAGFLRGPDWSIPILDFVEQKCEVFDDEEESKLTYTEIHQEYKELVEKLLESYLKEIGINEDQFQEACTSPLAKTRTSQAILQPVLAAEDFTIFKAMMVQKNIEMQLQAIRIIQERNGVLPDCLTDGADVVSDLEQEEMKILREVLRKSKEEYDQEEERKRKKQSSEAKMEELPVYTSEAEKMSNSQGDGEHFVQPPSEVKVHFANQSVQPLARKMELLPETSSLTQKGLKIPGLEHASMEGPIANLSALGTEELRQREHYLKQKRDKLLSMRKDTRTKQIQNTEQKGKPTREAEEMTEKPEMTAEEKQTLLKRRLLAEKLKEEVINK</sequence>
<evidence type="ECO:0000250" key="1"/>
<evidence type="ECO:0000250" key="2">
    <source>
        <dbReference type="UniProtKB" id="Q96G28"/>
    </source>
</evidence>
<evidence type="ECO:0000255" key="3"/>
<evidence type="ECO:0000256" key="4">
    <source>
        <dbReference type="SAM" id="MobiDB-lite"/>
    </source>
</evidence>
<evidence type="ECO:0000305" key="5"/>
<evidence type="ECO:0000312" key="6">
    <source>
        <dbReference type="MGI" id="MGI:1913994"/>
    </source>
</evidence>
<evidence type="ECO:0007744" key="7">
    <source>
    </source>
</evidence>
<evidence type="ECO:0007829" key="8">
    <source>
        <dbReference type="PDB" id="4ZI3"/>
    </source>
</evidence>
<accession>Q8C6E0</accession>
<accession>Q9CWQ4</accession>
<dbReference type="EMBL" id="AK010468">
    <property type="protein sequence ID" value="BAB26962.1"/>
    <property type="molecule type" value="mRNA"/>
</dbReference>
<dbReference type="EMBL" id="AK075858">
    <property type="protein sequence ID" value="BAC36009.1"/>
    <property type="molecule type" value="mRNA"/>
</dbReference>
<dbReference type="EMBL" id="AL935054">
    <property type="status" value="NOT_ANNOTATED_CDS"/>
    <property type="molecule type" value="Genomic_DNA"/>
</dbReference>
<dbReference type="EMBL" id="BX294116">
    <property type="status" value="NOT_ANNOTATED_CDS"/>
    <property type="molecule type" value="Genomic_DNA"/>
</dbReference>
<dbReference type="CCDS" id="CCDS24493.1"/>
<dbReference type="RefSeq" id="NP_080016.1">
    <property type="nucleotide sequence ID" value="NM_025740.3"/>
</dbReference>
<dbReference type="PDB" id="4ZI2">
    <property type="method" value="X-ray"/>
    <property type="resolution" value="2.20 A"/>
    <property type="chains" value="C/D=1-133"/>
</dbReference>
<dbReference type="PDB" id="4ZI3">
    <property type="method" value="X-ray"/>
    <property type="resolution" value="2.00 A"/>
    <property type="chains" value="C/D=1-133"/>
</dbReference>
<dbReference type="PDBsum" id="4ZI2"/>
<dbReference type="PDBsum" id="4ZI3"/>
<dbReference type="SMR" id="Q8C6E0"/>
<dbReference type="BioGRID" id="229767">
    <property type="interactions" value="2"/>
</dbReference>
<dbReference type="DIP" id="DIP-61817N"/>
<dbReference type="FunCoup" id="Q8C6E0">
    <property type="interactions" value="343"/>
</dbReference>
<dbReference type="IntAct" id="Q8C6E0">
    <property type="interactions" value="2"/>
</dbReference>
<dbReference type="STRING" id="10090.ENSMUSP00000020754"/>
<dbReference type="GlyGen" id="Q8C6E0">
    <property type="glycosylation" value="1 site, 1 O-linked glycan (1 site)"/>
</dbReference>
<dbReference type="iPTMnet" id="Q8C6E0"/>
<dbReference type="PhosphoSitePlus" id="Q8C6E0"/>
<dbReference type="SwissPalm" id="Q8C6E0"/>
<dbReference type="PaxDb" id="10090-ENSMUSP00000020754"/>
<dbReference type="PeptideAtlas" id="Q8C6E0"/>
<dbReference type="ProteomicsDB" id="281596"/>
<dbReference type="Pumba" id="Q8C6E0"/>
<dbReference type="Antibodypedia" id="2144">
    <property type="antibodies" value="49 antibodies from 14 providers"/>
</dbReference>
<dbReference type="DNASU" id="216618"/>
<dbReference type="Ensembl" id="ENSMUST00000020754.10">
    <property type="protein sequence ID" value="ENSMUSP00000020754.4"/>
    <property type="gene ID" value="ENSMUSG00000020462.15"/>
</dbReference>
<dbReference type="GeneID" id="216618"/>
<dbReference type="KEGG" id="mmu:216618"/>
<dbReference type="UCSC" id="uc007igu.1">
    <property type="organism name" value="mouse"/>
</dbReference>
<dbReference type="AGR" id="MGI:1913994"/>
<dbReference type="CTD" id="112942"/>
<dbReference type="MGI" id="MGI:1913994">
    <property type="gene designation" value="Cfap36"/>
</dbReference>
<dbReference type="VEuPathDB" id="HostDB:ENSMUSG00000020462"/>
<dbReference type="eggNOG" id="KOG4511">
    <property type="taxonomic scope" value="Eukaryota"/>
</dbReference>
<dbReference type="GeneTree" id="ENSGT00390000012785"/>
<dbReference type="HOGENOM" id="CLU_050059_0_0_1"/>
<dbReference type="InParanoid" id="Q8C6E0"/>
<dbReference type="OMA" id="HKSPGHF"/>
<dbReference type="OrthoDB" id="272687at2759"/>
<dbReference type="PhylomeDB" id="Q8C6E0"/>
<dbReference type="TreeFam" id="TF315143"/>
<dbReference type="BioGRID-ORCS" id="216618">
    <property type="hits" value="3 hits in 76 CRISPR screens"/>
</dbReference>
<dbReference type="ChiTaRS" id="Cfap36">
    <property type="organism name" value="mouse"/>
</dbReference>
<dbReference type="EvolutionaryTrace" id="Q8C6E0"/>
<dbReference type="PRO" id="PR:Q8C6E0"/>
<dbReference type="Proteomes" id="UP000000589">
    <property type="component" value="Chromosome 11"/>
</dbReference>
<dbReference type="RNAct" id="Q8C6E0">
    <property type="molecule type" value="protein"/>
</dbReference>
<dbReference type="Bgee" id="ENSMUSG00000020462">
    <property type="expression patterns" value="Expressed in seminiferous tubule of testis and 254 other cell types or tissues"/>
</dbReference>
<dbReference type="ExpressionAtlas" id="Q8C6E0">
    <property type="expression patterns" value="baseline and differential"/>
</dbReference>
<dbReference type="GO" id="GO:0097546">
    <property type="term" value="C:ciliary base"/>
    <property type="evidence" value="ECO:0000314"/>
    <property type="project" value="UniProtKB"/>
</dbReference>
<dbReference type="GO" id="GO:0035869">
    <property type="term" value="C:ciliary transition zone"/>
    <property type="evidence" value="ECO:0007669"/>
    <property type="project" value="Ensembl"/>
</dbReference>
<dbReference type="GO" id="GO:0005737">
    <property type="term" value="C:cytoplasm"/>
    <property type="evidence" value="ECO:0007669"/>
    <property type="project" value="UniProtKB-SubCell"/>
</dbReference>
<dbReference type="GO" id="GO:0031514">
    <property type="term" value="C:motile cilium"/>
    <property type="evidence" value="ECO:0007669"/>
    <property type="project" value="UniProtKB-SubCell"/>
</dbReference>
<dbReference type="GO" id="GO:0005634">
    <property type="term" value="C:nucleus"/>
    <property type="evidence" value="ECO:0007669"/>
    <property type="project" value="UniProtKB-SubCell"/>
</dbReference>
<dbReference type="FunFam" id="1.20.1520.10:FF:000001">
    <property type="entry name" value="Cilia- and flagella-associated protein 36"/>
    <property type="match status" value="1"/>
</dbReference>
<dbReference type="Gene3D" id="1.20.1520.10">
    <property type="entry name" value="ADP-ribosylation factor-like 2-binding protein, domain"/>
    <property type="match status" value="1"/>
</dbReference>
<dbReference type="InterPro" id="IPR023379">
    <property type="entry name" value="BART_dom"/>
</dbReference>
<dbReference type="InterPro" id="IPR042541">
    <property type="entry name" value="BART_sf"/>
</dbReference>
<dbReference type="InterPro" id="IPR038888">
    <property type="entry name" value="CFAP36"/>
</dbReference>
<dbReference type="PANTHER" id="PTHR21532:SF0">
    <property type="entry name" value="CILIA- AND FLAGELLA-ASSOCIATED PROTEIN 36"/>
    <property type="match status" value="1"/>
</dbReference>
<dbReference type="PANTHER" id="PTHR21532">
    <property type="entry name" value="PHOSPHODIESTERASE HL"/>
    <property type="match status" value="1"/>
</dbReference>
<dbReference type="Pfam" id="PF11527">
    <property type="entry name" value="ARL2_Bind_BART"/>
    <property type="match status" value="1"/>
</dbReference>
<gene>
    <name evidence="6" type="primary">Cfap36</name>
    <name evidence="6" type="synonym">Ccdc104</name>
</gene>
<protein>
    <recommendedName>
        <fullName evidence="6">Cilia- and flagella-associated protein 36</fullName>
    </recommendedName>
    <alternativeName>
        <fullName evidence="6">Coiled-coil domain-containing protein 104</fullName>
    </alternativeName>
</protein>
<feature type="chain" id="PRO_0000278639" description="Cilia- and flagella-associated protein 36">
    <location>
        <begin position="1"/>
        <end position="343"/>
    </location>
</feature>
<feature type="region of interest" description="Disordered" evidence="4">
    <location>
        <begin position="165"/>
        <end position="188"/>
    </location>
</feature>
<feature type="region of interest" description="Disordered" evidence="4">
    <location>
        <begin position="279"/>
        <end position="323"/>
    </location>
</feature>
<feature type="coiled-coil region" evidence="3">
    <location>
        <begin position="147"/>
        <end position="187"/>
    </location>
</feature>
<feature type="compositionally biased region" description="Basic and acidic residues" evidence="4">
    <location>
        <begin position="279"/>
        <end position="293"/>
    </location>
</feature>
<feature type="compositionally biased region" description="Basic and acidic residues" evidence="4">
    <location>
        <begin position="301"/>
        <end position="323"/>
    </location>
</feature>
<feature type="modified residue" description="Phosphoserine" evidence="7">
    <location>
        <position position="85"/>
    </location>
</feature>
<feature type="modified residue" description="Phosphoserine" evidence="7">
    <location>
        <position position="147"/>
    </location>
</feature>
<feature type="modified residue" description="Phosphoserine" evidence="7">
    <location>
        <position position="201"/>
    </location>
</feature>
<feature type="sequence conflict" description="In Ref. 1; BAB26962." evidence="5" ref="1">
    <original>Q</original>
    <variation>H</variation>
    <location>
        <position position="225"/>
    </location>
</feature>
<feature type="helix" evidence="8">
    <location>
        <begin position="8"/>
        <end position="21"/>
    </location>
</feature>
<feature type="helix" evidence="8">
    <location>
        <begin position="23"/>
        <end position="36"/>
    </location>
</feature>
<feature type="helix" evidence="8">
    <location>
        <begin position="37"/>
        <end position="39"/>
    </location>
</feature>
<feature type="strand" evidence="8">
    <location>
        <begin position="42"/>
        <end position="46"/>
    </location>
</feature>
<feature type="helix" evidence="8">
    <location>
        <begin position="48"/>
        <end position="72"/>
    </location>
</feature>
<feature type="helix" evidence="8">
    <location>
        <begin position="76"/>
        <end position="84"/>
    </location>
</feature>
<feature type="helix" evidence="8">
    <location>
        <begin position="87"/>
        <end position="91"/>
    </location>
</feature>
<feature type="helix" evidence="8">
    <location>
        <begin position="94"/>
        <end position="104"/>
    </location>
</feature>
<feature type="helix" evidence="8">
    <location>
        <begin position="106"/>
        <end position="128"/>
    </location>
</feature>
<organism>
    <name type="scientific">Mus musculus</name>
    <name type="common">Mouse</name>
    <dbReference type="NCBI Taxonomy" id="10090"/>
    <lineage>
        <taxon>Eukaryota</taxon>
        <taxon>Metazoa</taxon>
        <taxon>Chordata</taxon>
        <taxon>Craniata</taxon>
        <taxon>Vertebrata</taxon>
        <taxon>Euteleostomi</taxon>
        <taxon>Mammalia</taxon>
        <taxon>Eutheria</taxon>
        <taxon>Euarchontoglires</taxon>
        <taxon>Glires</taxon>
        <taxon>Rodentia</taxon>
        <taxon>Myomorpha</taxon>
        <taxon>Muroidea</taxon>
        <taxon>Muridae</taxon>
        <taxon>Murinae</taxon>
        <taxon>Mus</taxon>
        <taxon>Mus</taxon>
    </lineage>
</organism>
<name>CFA36_MOUSE</name>
<keyword id="KW-0002">3D-structure</keyword>
<keyword id="KW-0966">Cell projection</keyword>
<keyword id="KW-0969">Cilium</keyword>
<keyword id="KW-0175">Coiled coil</keyword>
<keyword id="KW-0963">Cytoplasm</keyword>
<keyword id="KW-0282">Flagellum</keyword>
<keyword id="KW-0539">Nucleus</keyword>
<keyword id="KW-0597">Phosphoprotein</keyword>
<keyword id="KW-1185">Reference proteome</keyword>
<reference key="1">
    <citation type="journal article" date="2005" name="Science">
        <title>The transcriptional landscape of the mammalian genome.</title>
        <authorList>
            <person name="Carninci P."/>
            <person name="Kasukawa T."/>
            <person name="Katayama S."/>
            <person name="Gough J."/>
            <person name="Frith M.C."/>
            <person name="Maeda N."/>
            <person name="Oyama R."/>
            <person name="Ravasi T."/>
            <person name="Lenhard B."/>
            <person name="Wells C."/>
            <person name="Kodzius R."/>
            <person name="Shimokawa K."/>
            <person name="Bajic V.B."/>
            <person name="Brenner S.E."/>
            <person name="Batalov S."/>
            <person name="Forrest A.R."/>
            <person name="Zavolan M."/>
            <person name="Davis M.J."/>
            <person name="Wilming L.G."/>
            <person name="Aidinis V."/>
            <person name="Allen J.E."/>
            <person name="Ambesi-Impiombato A."/>
            <person name="Apweiler R."/>
            <person name="Aturaliya R.N."/>
            <person name="Bailey T.L."/>
            <person name="Bansal M."/>
            <person name="Baxter L."/>
            <person name="Beisel K.W."/>
            <person name="Bersano T."/>
            <person name="Bono H."/>
            <person name="Chalk A.M."/>
            <person name="Chiu K.P."/>
            <person name="Choudhary V."/>
            <person name="Christoffels A."/>
            <person name="Clutterbuck D.R."/>
            <person name="Crowe M.L."/>
            <person name="Dalla E."/>
            <person name="Dalrymple B.P."/>
            <person name="de Bono B."/>
            <person name="Della Gatta G."/>
            <person name="di Bernardo D."/>
            <person name="Down T."/>
            <person name="Engstrom P."/>
            <person name="Fagiolini M."/>
            <person name="Faulkner G."/>
            <person name="Fletcher C.F."/>
            <person name="Fukushima T."/>
            <person name="Furuno M."/>
            <person name="Futaki S."/>
            <person name="Gariboldi M."/>
            <person name="Georgii-Hemming P."/>
            <person name="Gingeras T.R."/>
            <person name="Gojobori T."/>
            <person name="Green R.E."/>
            <person name="Gustincich S."/>
            <person name="Harbers M."/>
            <person name="Hayashi Y."/>
            <person name="Hensch T.K."/>
            <person name="Hirokawa N."/>
            <person name="Hill D."/>
            <person name="Huminiecki L."/>
            <person name="Iacono M."/>
            <person name="Ikeo K."/>
            <person name="Iwama A."/>
            <person name="Ishikawa T."/>
            <person name="Jakt M."/>
            <person name="Kanapin A."/>
            <person name="Katoh M."/>
            <person name="Kawasawa Y."/>
            <person name="Kelso J."/>
            <person name="Kitamura H."/>
            <person name="Kitano H."/>
            <person name="Kollias G."/>
            <person name="Krishnan S.P."/>
            <person name="Kruger A."/>
            <person name="Kummerfeld S.K."/>
            <person name="Kurochkin I.V."/>
            <person name="Lareau L.F."/>
            <person name="Lazarevic D."/>
            <person name="Lipovich L."/>
            <person name="Liu J."/>
            <person name="Liuni S."/>
            <person name="McWilliam S."/>
            <person name="Madan Babu M."/>
            <person name="Madera M."/>
            <person name="Marchionni L."/>
            <person name="Matsuda H."/>
            <person name="Matsuzawa S."/>
            <person name="Miki H."/>
            <person name="Mignone F."/>
            <person name="Miyake S."/>
            <person name="Morris K."/>
            <person name="Mottagui-Tabar S."/>
            <person name="Mulder N."/>
            <person name="Nakano N."/>
            <person name="Nakauchi H."/>
            <person name="Ng P."/>
            <person name="Nilsson R."/>
            <person name="Nishiguchi S."/>
            <person name="Nishikawa S."/>
            <person name="Nori F."/>
            <person name="Ohara O."/>
            <person name="Okazaki Y."/>
            <person name="Orlando V."/>
            <person name="Pang K.C."/>
            <person name="Pavan W.J."/>
            <person name="Pavesi G."/>
            <person name="Pesole G."/>
            <person name="Petrovsky N."/>
            <person name="Piazza S."/>
            <person name="Reed J."/>
            <person name="Reid J.F."/>
            <person name="Ring B.Z."/>
            <person name="Ringwald M."/>
            <person name="Rost B."/>
            <person name="Ruan Y."/>
            <person name="Salzberg S.L."/>
            <person name="Sandelin A."/>
            <person name="Schneider C."/>
            <person name="Schoenbach C."/>
            <person name="Sekiguchi K."/>
            <person name="Semple C.A."/>
            <person name="Seno S."/>
            <person name="Sessa L."/>
            <person name="Sheng Y."/>
            <person name="Shibata Y."/>
            <person name="Shimada H."/>
            <person name="Shimada K."/>
            <person name="Silva D."/>
            <person name="Sinclair B."/>
            <person name="Sperling S."/>
            <person name="Stupka E."/>
            <person name="Sugiura K."/>
            <person name="Sultana R."/>
            <person name="Takenaka Y."/>
            <person name="Taki K."/>
            <person name="Tammoja K."/>
            <person name="Tan S.L."/>
            <person name="Tang S."/>
            <person name="Taylor M.S."/>
            <person name="Tegner J."/>
            <person name="Teichmann S.A."/>
            <person name="Ueda H.R."/>
            <person name="van Nimwegen E."/>
            <person name="Verardo R."/>
            <person name="Wei C.L."/>
            <person name="Yagi K."/>
            <person name="Yamanishi H."/>
            <person name="Zabarovsky E."/>
            <person name="Zhu S."/>
            <person name="Zimmer A."/>
            <person name="Hide W."/>
            <person name="Bult C."/>
            <person name="Grimmond S.M."/>
            <person name="Teasdale R.D."/>
            <person name="Liu E.T."/>
            <person name="Brusic V."/>
            <person name="Quackenbush J."/>
            <person name="Wahlestedt C."/>
            <person name="Mattick J.S."/>
            <person name="Hume D.A."/>
            <person name="Kai C."/>
            <person name="Sasaki D."/>
            <person name="Tomaru Y."/>
            <person name="Fukuda S."/>
            <person name="Kanamori-Katayama M."/>
            <person name="Suzuki M."/>
            <person name="Aoki J."/>
            <person name="Arakawa T."/>
            <person name="Iida J."/>
            <person name="Imamura K."/>
            <person name="Itoh M."/>
            <person name="Kato T."/>
            <person name="Kawaji H."/>
            <person name="Kawagashira N."/>
            <person name="Kawashima T."/>
            <person name="Kojima M."/>
            <person name="Kondo S."/>
            <person name="Konno H."/>
            <person name="Nakano K."/>
            <person name="Ninomiya N."/>
            <person name="Nishio T."/>
            <person name="Okada M."/>
            <person name="Plessy C."/>
            <person name="Shibata K."/>
            <person name="Shiraki T."/>
            <person name="Suzuki S."/>
            <person name="Tagami M."/>
            <person name="Waki K."/>
            <person name="Watahiki A."/>
            <person name="Okamura-Oho Y."/>
            <person name="Suzuki H."/>
            <person name="Kawai J."/>
            <person name="Hayashizaki Y."/>
        </authorList>
    </citation>
    <scope>NUCLEOTIDE SEQUENCE [LARGE SCALE MRNA]</scope>
    <source>
        <strain>C57BL/6J</strain>
        <tissue>Tongue</tissue>
    </source>
</reference>
<reference key="2">
    <citation type="journal article" date="2009" name="PLoS Biol.">
        <title>Lineage-specific biology revealed by a finished genome assembly of the mouse.</title>
        <authorList>
            <person name="Church D.M."/>
            <person name="Goodstadt L."/>
            <person name="Hillier L.W."/>
            <person name="Zody M.C."/>
            <person name="Goldstein S."/>
            <person name="She X."/>
            <person name="Bult C.J."/>
            <person name="Agarwala R."/>
            <person name="Cherry J.L."/>
            <person name="DiCuccio M."/>
            <person name="Hlavina W."/>
            <person name="Kapustin Y."/>
            <person name="Meric P."/>
            <person name="Maglott D."/>
            <person name="Birtle Z."/>
            <person name="Marques A.C."/>
            <person name="Graves T."/>
            <person name="Zhou S."/>
            <person name="Teague B."/>
            <person name="Potamousis K."/>
            <person name="Churas C."/>
            <person name="Place M."/>
            <person name="Herschleb J."/>
            <person name="Runnheim R."/>
            <person name="Forrest D."/>
            <person name="Amos-Landgraf J."/>
            <person name="Schwartz D.C."/>
            <person name="Cheng Z."/>
            <person name="Lindblad-Toh K."/>
            <person name="Eichler E.E."/>
            <person name="Ponting C.P."/>
        </authorList>
    </citation>
    <scope>NUCLEOTIDE SEQUENCE [LARGE SCALE GENOMIC DNA]</scope>
    <source>
        <strain>C57BL/6J</strain>
    </source>
</reference>
<reference key="3">
    <citation type="journal article" date="2010" name="Cell">
        <title>A tissue-specific atlas of mouse protein phosphorylation and expression.</title>
        <authorList>
            <person name="Huttlin E.L."/>
            <person name="Jedrychowski M.P."/>
            <person name="Elias J.E."/>
            <person name="Goswami T."/>
            <person name="Rad R."/>
            <person name="Beausoleil S.A."/>
            <person name="Villen J."/>
            <person name="Haas W."/>
            <person name="Sowa M.E."/>
            <person name="Gygi S.P."/>
        </authorList>
    </citation>
    <scope>PHOSPHORYLATION [LARGE SCALE ANALYSIS] AT SER-85; SER-147 AND SER-201</scope>
    <scope>IDENTIFICATION BY MASS SPECTROMETRY [LARGE SCALE ANALYSIS]</scope>
    <source>
        <tissue>Brain</tissue>
        <tissue>Testis</tissue>
    </source>
</reference>